<reference key="1">
    <citation type="journal article" date="2004" name="Proc. Natl. Acad. Sci. U.S.A.">
        <title>Genome sequence of the enterobacterial phytopathogen Erwinia carotovora subsp. atroseptica and characterization of virulence factors.</title>
        <authorList>
            <person name="Bell K.S."/>
            <person name="Sebaihia M."/>
            <person name="Pritchard L."/>
            <person name="Holden M.T.G."/>
            <person name="Hyman L.J."/>
            <person name="Holeva M.C."/>
            <person name="Thomson N.R."/>
            <person name="Bentley S.D."/>
            <person name="Churcher L.J.C."/>
            <person name="Mungall K."/>
            <person name="Atkin R."/>
            <person name="Bason N."/>
            <person name="Brooks K."/>
            <person name="Chillingworth T."/>
            <person name="Clark K."/>
            <person name="Doggett J."/>
            <person name="Fraser A."/>
            <person name="Hance Z."/>
            <person name="Hauser H."/>
            <person name="Jagels K."/>
            <person name="Moule S."/>
            <person name="Norbertczak H."/>
            <person name="Ormond D."/>
            <person name="Price C."/>
            <person name="Quail M.A."/>
            <person name="Sanders M."/>
            <person name="Walker D."/>
            <person name="Whitehead S."/>
            <person name="Salmond G.P.C."/>
            <person name="Birch P.R.J."/>
            <person name="Parkhill J."/>
            <person name="Toth I.K."/>
        </authorList>
    </citation>
    <scope>NUCLEOTIDE SEQUENCE [LARGE SCALE GENOMIC DNA]</scope>
    <source>
        <strain>SCRI 1043 / ATCC BAA-672</strain>
    </source>
</reference>
<sequence>MLHTLSCSPYHADLDTLLRSLEQGDALVLLQDGVIAALVGGDIIHRLLDSAVLLYALRPDTEARGMTEQISNSVVLIGYNEFVQLTVEHPQQLAW</sequence>
<organism>
    <name type="scientific">Pectobacterium atrosepticum (strain SCRI 1043 / ATCC BAA-672)</name>
    <name type="common">Erwinia carotovora subsp. atroseptica</name>
    <dbReference type="NCBI Taxonomy" id="218491"/>
    <lineage>
        <taxon>Bacteria</taxon>
        <taxon>Pseudomonadati</taxon>
        <taxon>Pseudomonadota</taxon>
        <taxon>Gammaproteobacteria</taxon>
        <taxon>Enterobacterales</taxon>
        <taxon>Pectobacteriaceae</taxon>
        <taxon>Pectobacterium</taxon>
    </lineage>
</organism>
<evidence type="ECO:0000255" key="1">
    <source>
        <dbReference type="HAMAP-Rule" id="MF_01564"/>
    </source>
</evidence>
<protein>
    <recommendedName>
        <fullName evidence="1">Protein TusB</fullName>
    </recommendedName>
    <alternativeName>
        <fullName evidence="1">tRNA 2-thiouridine synthesizing protein B</fullName>
    </alternativeName>
</protein>
<gene>
    <name evidence="1" type="primary">tusB</name>
    <name type="ordered locus">ECA4039</name>
</gene>
<keyword id="KW-0963">Cytoplasm</keyword>
<keyword id="KW-1185">Reference proteome</keyword>
<keyword id="KW-0819">tRNA processing</keyword>
<dbReference type="EMBL" id="BX950851">
    <property type="protein sequence ID" value="CAG76936.1"/>
    <property type="molecule type" value="Genomic_DNA"/>
</dbReference>
<dbReference type="RefSeq" id="WP_011095515.1">
    <property type="nucleotide sequence ID" value="NC_004547.2"/>
</dbReference>
<dbReference type="SMR" id="Q6CZW2"/>
<dbReference type="STRING" id="218491.ECA4039"/>
<dbReference type="GeneID" id="57210703"/>
<dbReference type="KEGG" id="eca:ECA4039"/>
<dbReference type="PATRIC" id="fig|218491.5.peg.4105"/>
<dbReference type="eggNOG" id="COG2168">
    <property type="taxonomic scope" value="Bacteria"/>
</dbReference>
<dbReference type="HOGENOM" id="CLU_166087_2_1_6"/>
<dbReference type="OrthoDB" id="9795117at2"/>
<dbReference type="Proteomes" id="UP000007966">
    <property type="component" value="Chromosome"/>
</dbReference>
<dbReference type="GO" id="GO:1990228">
    <property type="term" value="C:sulfurtransferase complex"/>
    <property type="evidence" value="ECO:0007669"/>
    <property type="project" value="TreeGrafter"/>
</dbReference>
<dbReference type="GO" id="GO:0002143">
    <property type="term" value="P:tRNA wobble position uridine thiolation"/>
    <property type="evidence" value="ECO:0007669"/>
    <property type="project" value="InterPro"/>
</dbReference>
<dbReference type="Gene3D" id="3.40.1260.10">
    <property type="entry name" value="DsrEFH-like"/>
    <property type="match status" value="1"/>
</dbReference>
<dbReference type="HAMAP" id="MF_01564">
    <property type="entry name" value="Thiourid_synth_B"/>
    <property type="match status" value="1"/>
</dbReference>
<dbReference type="InterPro" id="IPR027396">
    <property type="entry name" value="DsrEFH-like"/>
</dbReference>
<dbReference type="InterPro" id="IPR023526">
    <property type="entry name" value="Sulphur_relay_TusB"/>
</dbReference>
<dbReference type="InterPro" id="IPR007215">
    <property type="entry name" value="Sulphur_relay_TusB/DsrH"/>
</dbReference>
<dbReference type="NCBIfam" id="NF010035">
    <property type="entry name" value="PRK13510.1"/>
    <property type="match status" value="1"/>
</dbReference>
<dbReference type="NCBIfam" id="TIGR03011">
    <property type="entry name" value="sulf_tusB_dsrH"/>
    <property type="match status" value="1"/>
</dbReference>
<dbReference type="PANTHER" id="PTHR37526">
    <property type="entry name" value="PROTEIN TUSB"/>
    <property type="match status" value="1"/>
</dbReference>
<dbReference type="PANTHER" id="PTHR37526:SF1">
    <property type="entry name" value="PROTEIN TUSB"/>
    <property type="match status" value="1"/>
</dbReference>
<dbReference type="Pfam" id="PF04077">
    <property type="entry name" value="DsrH"/>
    <property type="match status" value="1"/>
</dbReference>
<dbReference type="SUPFAM" id="SSF75169">
    <property type="entry name" value="DsrEFH-like"/>
    <property type="match status" value="1"/>
</dbReference>
<feature type="chain" id="PRO_0000234511" description="Protein TusB">
    <location>
        <begin position="1"/>
        <end position="95"/>
    </location>
</feature>
<comment type="function">
    <text evidence="1">Part of a sulfur-relay system required for 2-thiolation of 5-methylaminomethyl-2-thiouridine (mnm(5)s(2)U) at tRNA wobble positions.</text>
</comment>
<comment type="subunit">
    <text evidence="1">Heterohexamer, formed by a dimer of trimers. The hexameric TusBCD complex contains 2 copies each of TusB, TusC and TusD. The TusBCD complex interacts with TusE.</text>
</comment>
<comment type="subcellular location">
    <subcellularLocation>
        <location evidence="1">Cytoplasm</location>
    </subcellularLocation>
</comment>
<comment type="similarity">
    <text evidence="1">Belongs to the DsrH/TusB family.</text>
</comment>
<accession>Q6CZW2</accession>
<proteinExistence type="inferred from homology"/>
<name>TUSB_PECAS</name>